<feature type="chain" id="PRO_0000417083" description="CRISPR-associated endonuclease Cas1 1">
    <location>
        <begin position="1"/>
        <end position="313"/>
    </location>
</feature>
<feature type="region of interest" description="Disordered" evidence="2">
    <location>
        <begin position="288"/>
        <end position="313"/>
    </location>
</feature>
<feature type="binding site" evidence="1">
    <location>
        <position position="144"/>
    </location>
    <ligand>
        <name>Mn(2+)</name>
        <dbReference type="ChEBI" id="CHEBI:29035"/>
    </ligand>
</feature>
<feature type="binding site" evidence="1">
    <location>
        <position position="211"/>
    </location>
    <ligand>
        <name>Mn(2+)</name>
        <dbReference type="ChEBI" id="CHEBI:29035"/>
    </ligand>
</feature>
<feature type="binding site" evidence="1">
    <location>
        <position position="224"/>
    </location>
    <ligand>
        <name>Mn(2+)</name>
        <dbReference type="ChEBI" id="CHEBI:29035"/>
    </ligand>
</feature>
<organism>
    <name type="scientific">Rhodospirillum rubrum (strain ATCC 11170 / ATH 1.1.1 / DSM 467 / LMG 4362 / NCIMB 8255 / S1)</name>
    <dbReference type="NCBI Taxonomy" id="269796"/>
    <lineage>
        <taxon>Bacteria</taxon>
        <taxon>Pseudomonadati</taxon>
        <taxon>Pseudomonadota</taxon>
        <taxon>Alphaproteobacteria</taxon>
        <taxon>Rhodospirillales</taxon>
        <taxon>Rhodospirillaceae</taxon>
        <taxon>Rhodospirillum</taxon>
    </lineage>
</organism>
<proteinExistence type="inferred from homology"/>
<comment type="function">
    <text evidence="1">CRISPR (clustered regularly interspaced short palindromic repeat), is an adaptive immune system that provides protection against mobile genetic elements (viruses, transposable elements and conjugative plasmids). CRISPR clusters contain spacers, sequences complementary to antecedent mobile elements, and target invading nucleic acids. CRISPR clusters are transcribed and processed into CRISPR RNA (crRNA). Acts as a dsDNA endonuclease. Involved in the integration of spacer DNA into the CRISPR cassette.</text>
</comment>
<comment type="cofactor">
    <cofactor evidence="1">
        <name>Mg(2+)</name>
        <dbReference type="ChEBI" id="CHEBI:18420"/>
    </cofactor>
    <cofactor evidence="1">
        <name>Mn(2+)</name>
        <dbReference type="ChEBI" id="CHEBI:29035"/>
    </cofactor>
</comment>
<comment type="subunit">
    <text evidence="1">Homodimer, forms a heterotetramer with a Cas2 homodimer.</text>
</comment>
<comment type="similarity">
    <text evidence="1">Belongs to the CRISPR-associated endonuclease Cas1 family.</text>
</comment>
<keyword id="KW-0051">Antiviral defense</keyword>
<keyword id="KW-0238">DNA-binding</keyword>
<keyword id="KW-0255">Endonuclease</keyword>
<keyword id="KW-0378">Hydrolase</keyword>
<keyword id="KW-0460">Magnesium</keyword>
<keyword id="KW-0464">Manganese</keyword>
<keyword id="KW-0479">Metal-binding</keyword>
<keyword id="KW-0540">Nuclease</keyword>
<keyword id="KW-1185">Reference proteome</keyword>
<reference key="1">
    <citation type="journal article" date="2011" name="Stand. Genomic Sci.">
        <title>Complete genome sequence of Rhodospirillum rubrum type strain (S1).</title>
        <authorList>
            <person name="Munk A.C."/>
            <person name="Copeland A."/>
            <person name="Lucas S."/>
            <person name="Lapidus A."/>
            <person name="Del Rio T.G."/>
            <person name="Barry K."/>
            <person name="Detter J.C."/>
            <person name="Hammon N."/>
            <person name="Israni S."/>
            <person name="Pitluck S."/>
            <person name="Brettin T."/>
            <person name="Bruce D."/>
            <person name="Han C."/>
            <person name="Tapia R."/>
            <person name="Gilna P."/>
            <person name="Schmutz J."/>
            <person name="Larimer F."/>
            <person name="Land M."/>
            <person name="Kyrpides N.C."/>
            <person name="Mavromatis K."/>
            <person name="Richardson P."/>
            <person name="Rohde M."/>
            <person name="Goeker M."/>
            <person name="Klenk H.P."/>
            <person name="Zhang Y."/>
            <person name="Roberts G.P."/>
            <person name="Reslewic S."/>
            <person name="Schwartz D.C."/>
        </authorList>
    </citation>
    <scope>NUCLEOTIDE SEQUENCE [LARGE SCALE GENOMIC DNA]</scope>
    <source>
        <strain>ATCC 11170 / ATH 1.1.1 / DSM 467 / LMG 4362 / NCIMB 8255 / S1</strain>
    </source>
</reference>
<gene>
    <name evidence="1" type="primary">cas1-1</name>
    <name type="ordered locus">Rru_A0169</name>
</gene>
<evidence type="ECO:0000255" key="1">
    <source>
        <dbReference type="HAMAP-Rule" id="MF_01470"/>
    </source>
</evidence>
<evidence type="ECO:0000256" key="2">
    <source>
        <dbReference type="SAM" id="MobiDB-lite"/>
    </source>
</evidence>
<protein>
    <recommendedName>
        <fullName evidence="1">CRISPR-associated endonuclease Cas1 1</fullName>
        <ecNumber evidence="1">3.1.-.-</ecNumber>
    </recommendedName>
</protein>
<sequence length="313" mass="34305">MADPAFVPLRPIAIKDRSSIVFLQRGQLDVVDGAFVLIDQEGVRVQIPVGGLACLMLEPGTRITHAAIVLCARVGCLVIWVGERGTRLYAAGQPGGARADRLLFQARNALDETARLNVVREMYRRRFDDDPPARRSVDQLRGMEGVRVREIYRLLAKKYAVDWNARRYDHNDWDGADIPNRCLSAATACLYGLCEAAILAAGYAPAIGFLHRGKPQSFVYDVADLYKVETVVPTAFSIAAKIAAGKGDDSPPERQVRIACRDQFRKSGLLEKIIPDIEEILRAGGLEPPLDAPEAVDPVIPPEEPSGDDGHRG</sequence>
<dbReference type="EC" id="3.1.-.-" evidence="1"/>
<dbReference type="EMBL" id="CP000230">
    <property type="protein sequence ID" value="ABC20974.1"/>
    <property type="molecule type" value="Genomic_DNA"/>
</dbReference>
<dbReference type="RefSeq" id="YP_425261.1">
    <property type="nucleotide sequence ID" value="NC_007643.1"/>
</dbReference>
<dbReference type="SMR" id="Q2RY21"/>
<dbReference type="STRING" id="269796.Rru_A0169"/>
<dbReference type="EnsemblBacteria" id="ABC20974">
    <property type="protein sequence ID" value="ABC20974"/>
    <property type="gene ID" value="Rru_A0169"/>
</dbReference>
<dbReference type="KEGG" id="rru:Rru_A0169"/>
<dbReference type="PATRIC" id="fig|269796.9.peg.222"/>
<dbReference type="eggNOG" id="COG1518">
    <property type="taxonomic scope" value="Bacteria"/>
</dbReference>
<dbReference type="HOGENOM" id="CLU_077904_0_0_5"/>
<dbReference type="PhylomeDB" id="Q2RY21"/>
<dbReference type="Proteomes" id="UP000001929">
    <property type="component" value="Chromosome"/>
</dbReference>
<dbReference type="GO" id="GO:0003677">
    <property type="term" value="F:DNA binding"/>
    <property type="evidence" value="ECO:0007669"/>
    <property type="project" value="UniProtKB-KW"/>
</dbReference>
<dbReference type="GO" id="GO:0004520">
    <property type="term" value="F:DNA endonuclease activity"/>
    <property type="evidence" value="ECO:0007669"/>
    <property type="project" value="InterPro"/>
</dbReference>
<dbReference type="GO" id="GO:0046872">
    <property type="term" value="F:metal ion binding"/>
    <property type="evidence" value="ECO:0007669"/>
    <property type="project" value="UniProtKB-UniRule"/>
</dbReference>
<dbReference type="GO" id="GO:0051607">
    <property type="term" value="P:defense response to virus"/>
    <property type="evidence" value="ECO:0007669"/>
    <property type="project" value="UniProtKB-UniRule"/>
</dbReference>
<dbReference type="GO" id="GO:0043571">
    <property type="term" value="P:maintenance of CRISPR repeat elements"/>
    <property type="evidence" value="ECO:0007669"/>
    <property type="project" value="UniProtKB-UniRule"/>
</dbReference>
<dbReference type="CDD" id="cd09719">
    <property type="entry name" value="Cas1_I-E"/>
    <property type="match status" value="1"/>
</dbReference>
<dbReference type="Gene3D" id="1.20.120.920">
    <property type="entry name" value="CRISPR-associated endonuclease Cas1, C-terminal domain"/>
    <property type="match status" value="1"/>
</dbReference>
<dbReference type="Gene3D" id="3.100.10.20">
    <property type="entry name" value="CRISPR-associated endonuclease Cas1, N-terminal domain"/>
    <property type="match status" value="1"/>
</dbReference>
<dbReference type="HAMAP" id="MF_01470">
    <property type="entry name" value="Cas1"/>
    <property type="match status" value="1"/>
</dbReference>
<dbReference type="InterPro" id="IPR050646">
    <property type="entry name" value="Cas1"/>
</dbReference>
<dbReference type="InterPro" id="IPR033641">
    <property type="entry name" value="Cas1_I-E"/>
</dbReference>
<dbReference type="InterPro" id="IPR002729">
    <property type="entry name" value="CRISPR-assoc_Cas1"/>
</dbReference>
<dbReference type="InterPro" id="IPR042206">
    <property type="entry name" value="CRISPR-assoc_Cas1_C"/>
</dbReference>
<dbReference type="InterPro" id="IPR019851">
    <property type="entry name" value="CRISPR-assoc_Cas1_ECOLI"/>
</dbReference>
<dbReference type="InterPro" id="IPR042211">
    <property type="entry name" value="CRISPR-assoc_Cas1_N"/>
</dbReference>
<dbReference type="NCBIfam" id="TIGR00287">
    <property type="entry name" value="cas1"/>
    <property type="match status" value="1"/>
</dbReference>
<dbReference type="NCBIfam" id="TIGR03638">
    <property type="entry name" value="cas1_ECOLI"/>
    <property type="match status" value="1"/>
</dbReference>
<dbReference type="PANTHER" id="PTHR34353:SF3">
    <property type="entry name" value="CRISPR-ASSOCIATED ENDONUCLEASE CAS1"/>
    <property type="match status" value="1"/>
</dbReference>
<dbReference type="PANTHER" id="PTHR34353">
    <property type="entry name" value="CRISPR-ASSOCIATED ENDONUCLEASE CAS1 1"/>
    <property type="match status" value="1"/>
</dbReference>
<dbReference type="Pfam" id="PF01867">
    <property type="entry name" value="Cas_Cas1"/>
    <property type="match status" value="2"/>
</dbReference>
<name>CAS1A_RHORT</name>
<accession>Q2RY21</accession>